<reference key="1">
    <citation type="journal article" date="2011" name="MBio">
        <title>Novel metabolic attributes of the genus Cyanothece, comprising a group of unicellular nitrogen-fixing Cyanobacteria.</title>
        <authorList>
            <person name="Bandyopadhyay A."/>
            <person name="Elvitigala T."/>
            <person name="Welsh E."/>
            <person name="Stockel J."/>
            <person name="Liberton M."/>
            <person name="Min H."/>
            <person name="Sherman L.A."/>
            <person name="Pakrasi H.B."/>
        </authorList>
    </citation>
    <scope>NUCLEOTIDE SEQUENCE [LARGE SCALE GENOMIC DNA]</scope>
    <source>
        <strain>PCC 7424</strain>
    </source>
</reference>
<accession>B7KH28</accession>
<evidence type="ECO:0000255" key="1">
    <source>
        <dbReference type="HAMAP-Rule" id="MF_00639"/>
    </source>
</evidence>
<organism>
    <name type="scientific">Gloeothece citriformis (strain PCC 7424)</name>
    <name type="common">Cyanothece sp. (strain PCC 7424)</name>
    <dbReference type="NCBI Taxonomy" id="65393"/>
    <lineage>
        <taxon>Bacteria</taxon>
        <taxon>Bacillati</taxon>
        <taxon>Cyanobacteriota</taxon>
        <taxon>Cyanophyceae</taxon>
        <taxon>Oscillatoriophycideae</taxon>
        <taxon>Chroococcales</taxon>
        <taxon>Aphanothecaceae</taxon>
        <taxon>Gloeothece</taxon>
        <taxon>Gloeothece citriformis</taxon>
    </lineage>
</organism>
<proteinExistence type="inferred from homology"/>
<gene>
    <name evidence="1" type="primary">murD</name>
    <name type="ordered locus">PCC7424_5165</name>
</gene>
<sequence>MPKATIIGLGRSGIAAARVLKGDNWEVTLSDRSNSPNLQQTQGQLQQEGITVKLGDSFTLNPEDLPNLIVVSPGVPWDIPVLVEARDQGIDTIGELELAWRYLNGCSWVGITGTNGKTTTTALIAAIFKAAGLNAPACGNIGYAACELALTQQSYDWIIAEISSYQIESSATLSPKIGIWTTFTPDHLERHKTLDNYYQIKASLLSRCRRQIFNGDDPYLHNIGLSQWKDSYWTSVKGKEALLCDPSKGIYLQDNWIVAFGELIAPINLFKMVGEHNQQNLLMAVGAARLADINKDAIAEAMATFSGVPHRLELIRTIAGVDYINDSKATNYDAAQVGLSSVEAPVILIAGGQAKKGDDTEWIKLIKAKVATVLLIGEAASTFAQRLQESDYYAYEIVETMENAVERSASLATDKGVKIVLLSPACASFDQYQSFEHRGDHFRELCLQL</sequence>
<keyword id="KW-0067">ATP-binding</keyword>
<keyword id="KW-0131">Cell cycle</keyword>
<keyword id="KW-0132">Cell division</keyword>
<keyword id="KW-0133">Cell shape</keyword>
<keyword id="KW-0961">Cell wall biogenesis/degradation</keyword>
<keyword id="KW-0963">Cytoplasm</keyword>
<keyword id="KW-0436">Ligase</keyword>
<keyword id="KW-0547">Nucleotide-binding</keyword>
<keyword id="KW-0573">Peptidoglycan synthesis</keyword>
<keyword id="KW-1185">Reference proteome</keyword>
<dbReference type="EC" id="6.3.2.9" evidence="1"/>
<dbReference type="EMBL" id="CP001291">
    <property type="protein sequence ID" value="ACK73515.1"/>
    <property type="molecule type" value="Genomic_DNA"/>
</dbReference>
<dbReference type="RefSeq" id="WP_015957095.1">
    <property type="nucleotide sequence ID" value="NC_011729.1"/>
</dbReference>
<dbReference type="SMR" id="B7KH28"/>
<dbReference type="STRING" id="65393.PCC7424_5165"/>
<dbReference type="KEGG" id="cyc:PCC7424_5165"/>
<dbReference type="eggNOG" id="COG0771">
    <property type="taxonomic scope" value="Bacteria"/>
</dbReference>
<dbReference type="HOGENOM" id="CLU_032540_0_0_3"/>
<dbReference type="OrthoDB" id="9809796at2"/>
<dbReference type="UniPathway" id="UPA00219"/>
<dbReference type="Proteomes" id="UP000002384">
    <property type="component" value="Chromosome"/>
</dbReference>
<dbReference type="GO" id="GO:0005737">
    <property type="term" value="C:cytoplasm"/>
    <property type="evidence" value="ECO:0007669"/>
    <property type="project" value="UniProtKB-SubCell"/>
</dbReference>
<dbReference type="GO" id="GO:0005524">
    <property type="term" value="F:ATP binding"/>
    <property type="evidence" value="ECO:0007669"/>
    <property type="project" value="UniProtKB-UniRule"/>
</dbReference>
<dbReference type="GO" id="GO:0008764">
    <property type="term" value="F:UDP-N-acetylmuramoylalanine-D-glutamate ligase activity"/>
    <property type="evidence" value="ECO:0007669"/>
    <property type="project" value="UniProtKB-UniRule"/>
</dbReference>
<dbReference type="GO" id="GO:0051301">
    <property type="term" value="P:cell division"/>
    <property type="evidence" value="ECO:0007669"/>
    <property type="project" value="UniProtKB-KW"/>
</dbReference>
<dbReference type="GO" id="GO:0071555">
    <property type="term" value="P:cell wall organization"/>
    <property type="evidence" value="ECO:0007669"/>
    <property type="project" value="UniProtKB-KW"/>
</dbReference>
<dbReference type="GO" id="GO:0009252">
    <property type="term" value="P:peptidoglycan biosynthetic process"/>
    <property type="evidence" value="ECO:0007669"/>
    <property type="project" value="UniProtKB-UniRule"/>
</dbReference>
<dbReference type="GO" id="GO:0008360">
    <property type="term" value="P:regulation of cell shape"/>
    <property type="evidence" value="ECO:0007669"/>
    <property type="project" value="UniProtKB-KW"/>
</dbReference>
<dbReference type="Gene3D" id="3.90.190.20">
    <property type="entry name" value="Mur ligase, C-terminal domain"/>
    <property type="match status" value="1"/>
</dbReference>
<dbReference type="Gene3D" id="3.40.1190.10">
    <property type="entry name" value="Mur-like, catalytic domain"/>
    <property type="match status" value="1"/>
</dbReference>
<dbReference type="Gene3D" id="3.40.50.720">
    <property type="entry name" value="NAD(P)-binding Rossmann-like Domain"/>
    <property type="match status" value="1"/>
</dbReference>
<dbReference type="HAMAP" id="MF_00639">
    <property type="entry name" value="MurD"/>
    <property type="match status" value="1"/>
</dbReference>
<dbReference type="InterPro" id="IPR036565">
    <property type="entry name" value="Mur-like_cat_sf"/>
</dbReference>
<dbReference type="InterPro" id="IPR004101">
    <property type="entry name" value="Mur_ligase_C"/>
</dbReference>
<dbReference type="InterPro" id="IPR036615">
    <property type="entry name" value="Mur_ligase_C_dom_sf"/>
</dbReference>
<dbReference type="InterPro" id="IPR013221">
    <property type="entry name" value="Mur_ligase_cen"/>
</dbReference>
<dbReference type="InterPro" id="IPR005762">
    <property type="entry name" value="MurD"/>
</dbReference>
<dbReference type="NCBIfam" id="TIGR01087">
    <property type="entry name" value="murD"/>
    <property type="match status" value="1"/>
</dbReference>
<dbReference type="PANTHER" id="PTHR43692">
    <property type="entry name" value="UDP-N-ACETYLMURAMOYLALANINE--D-GLUTAMATE LIGASE"/>
    <property type="match status" value="1"/>
</dbReference>
<dbReference type="PANTHER" id="PTHR43692:SF1">
    <property type="entry name" value="UDP-N-ACETYLMURAMOYLALANINE--D-GLUTAMATE LIGASE"/>
    <property type="match status" value="1"/>
</dbReference>
<dbReference type="Pfam" id="PF02875">
    <property type="entry name" value="Mur_ligase_C"/>
    <property type="match status" value="1"/>
</dbReference>
<dbReference type="Pfam" id="PF08245">
    <property type="entry name" value="Mur_ligase_M"/>
    <property type="match status" value="1"/>
</dbReference>
<dbReference type="Pfam" id="PF21799">
    <property type="entry name" value="MurD-like_N"/>
    <property type="match status" value="1"/>
</dbReference>
<dbReference type="SUPFAM" id="SSF51984">
    <property type="entry name" value="MurCD N-terminal domain"/>
    <property type="match status" value="1"/>
</dbReference>
<dbReference type="SUPFAM" id="SSF53623">
    <property type="entry name" value="MurD-like peptide ligases, catalytic domain"/>
    <property type="match status" value="1"/>
</dbReference>
<dbReference type="SUPFAM" id="SSF53244">
    <property type="entry name" value="MurD-like peptide ligases, peptide-binding domain"/>
    <property type="match status" value="1"/>
</dbReference>
<feature type="chain" id="PRO_1000130850" description="UDP-N-acetylmuramoylalanine--D-glutamate ligase">
    <location>
        <begin position="1"/>
        <end position="449"/>
    </location>
</feature>
<feature type="binding site" evidence="1">
    <location>
        <begin position="113"/>
        <end position="119"/>
    </location>
    <ligand>
        <name>ATP</name>
        <dbReference type="ChEBI" id="CHEBI:30616"/>
    </ligand>
</feature>
<comment type="function">
    <text evidence="1">Cell wall formation. Catalyzes the addition of glutamate to the nucleotide precursor UDP-N-acetylmuramoyl-L-alanine (UMA).</text>
</comment>
<comment type="catalytic activity">
    <reaction evidence="1">
        <text>UDP-N-acetyl-alpha-D-muramoyl-L-alanine + D-glutamate + ATP = UDP-N-acetyl-alpha-D-muramoyl-L-alanyl-D-glutamate + ADP + phosphate + H(+)</text>
        <dbReference type="Rhea" id="RHEA:16429"/>
        <dbReference type="ChEBI" id="CHEBI:15378"/>
        <dbReference type="ChEBI" id="CHEBI:29986"/>
        <dbReference type="ChEBI" id="CHEBI:30616"/>
        <dbReference type="ChEBI" id="CHEBI:43474"/>
        <dbReference type="ChEBI" id="CHEBI:83898"/>
        <dbReference type="ChEBI" id="CHEBI:83900"/>
        <dbReference type="ChEBI" id="CHEBI:456216"/>
        <dbReference type="EC" id="6.3.2.9"/>
    </reaction>
</comment>
<comment type="pathway">
    <text evidence="1">Cell wall biogenesis; peptidoglycan biosynthesis.</text>
</comment>
<comment type="subcellular location">
    <subcellularLocation>
        <location evidence="1">Cytoplasm</location>
    </subcellularLocation>
</comment>
<comment type="similarity">
    <text evidence="1">Belongs to the MurCDEF family.</text>
</comment>
<protein>
    <recommendedName>
        <fullName evidence="1">UDP-N-acetylmuramoylalanine--D-glutamate ligase</fullName>
        <ecNumber evidence="1">6.3.2.9</ecNumber>
    </recommendedName>
    <alternativeName>
        <fullName evidence="1">D-glutamic acid-adding enzyme</fullName>
    </alternativeName>
    <alternativeName>
        <fullName evidence="1">UDP-N-acetylmuramoyl-L-alanyl-D-glutamate synthetase</fullName>
    </alternativeName>
</protein>
<name>MURD_GLOC7</name>